<name>G1092_SHESM</name>
<gene>
    <name type="ordered locus">Shewmr4_2535</name>
</gene>
<organism>
    <name type="scientific">Shewanella sp. (strain MR-4)</name>
    <dbReference type="NCBI Taxonomy" id="60480"/>
    <lineage>
        <taxon>Bacteria</taxon>
        <taxon>Pseudomonadati</taxon>
        <taxon>Pseudomonadota</taxon>
        <taxon>Gammaproteobacteria</taxon>
        <taxon>Alteromonadales</taxon>
        <taxon>Shewanellaceae</taxon>
        <taxon>Shewanella</taxon>
    </lineage>
</organism>
<accession>Q0HH61</accession>
<keyword id="KW-0326">Glycosidase</keyword>
<keyword id="KW-0378">Hydrolase</keyword>
<keyword id="KW-0520">NAD</keyword>
<keyword id="KW-0732">Signal</keyword>
<proteinExistence type="inferred from homology"/>
<dbReference type="EC" id="3.2.1.-"/>
<dbReference type="EMBL" id="CP000446">
    <property type="protein sequence ID" value="ABI39606.1"/>
    <property type="molecule type" value="Genomic_DNA"/>
</dbReference>
<dbReference type="RefSeq" id="WP_011623287.1">
    <property type="nucleotide sequence ID" value="NC_008321.1"/>
</dbReference>
<dbReference type="SMR" id="Q0HH61"/>
<dbReference type="CAZy" id="GH109">
    <property type="family name" value="Glycoside Hydrolase Family 109"/>
</dbReference>
<dbReference type="KEGG" id="she:Shewmr4_2535"/>
<dbReference type="HOGENOM" id="CLU_046965_0_0_6"/>
<dbReference type="GO" id="GO:0016798">
    <property type="term" value="F:hydrolase activity, acting on glycosyl bonds"/>
    <property type="evidence" value="ECO:0007669"/>
    <property type="project" value="UniProtKB-KW"/>
</dbReference>
<dbReference type="GO" id="GO:0000166">
    <property type="term" value="F:nucleotide binding"/>
    <property type="evidence" value="ECO:0007669"/>
    <property type="project" value="InterPro"/>
</dbReference>
<dbReference type="Gene3D" id="3.30.360.10">
    <property type="entry name" value="Dihydrodipicolinate Reductase, domain 2"/>
    <property type="match status" value="1"/>
</dbReference>
<dbReference type="Gene3D" id="3.40.50.720">
    <property type="entry name" value="NAD(P)-binding Rossmann-like Domain"/>
    <property type="match status" value="1"/>
</dbReference>
<dbReference type="InterPro" id="IPR000683">
    <property type="entry name" value="Gfo/Idh/MocA-like_OxRdtase_N"/>
</dbReference>
<dbReference type="InterPro" id="IPR050463">
    <property type="entry name" value="Gfo/Idh/MocA_oxidrdct_glycsds"/>
</dbReference>
<dbReference type="InterPro" id="IPR049303">
    <property type="entry name" value="Glyco_hydro_109_C"/>
</dbReference>
<dbReference type="InterPro" id="IPR036291">
    <property type="entry name" value="NAD(P)-bd_dom_sf"/>
</dbReference>
<dbReference type="InterPro" id="IPR006311">
    <property type="entry name" value="TAT_signal"/>
</dbReference>
<dbReference type="InterPro" id="IPR019546">
    <property type="entry name" value="TAT_signal_bac_arc"/>
</dbReference>
<dbReference type="PANTHER" id="PTHR43818">
    <property type="entry name" value="BCDNA.GH03377"/>
    <property type="match status" value="1"/>
</dbReference>
<dbReference type="PANTHER" id="PTHR43818:SF1">
    <property type="entry name" value="GLYCOSYL HYDROLASE FAMILY 109 PROTEIN"/>
    <property type="match status" value="1"/>
</dbReference>
<dbReference type="Pfam" id="PF01408">
    <property type="entry name" value="GFO_IDH_MocA"/>
    <property type="match status" value="1"/>
</dbReference>
<dbReference type="Pfam" id="PF21252">
    <property type="entry name" value="Glyco_hydro_109_C"/>
    <property type="match status" value="1"/>
</dbReference>
<dbReference type="Pfam" id="PF10518">
    <property type="entry name" value="TAT_signal"/>
    <property type="match status" value="1"/>
</dbReference>
<dbReference type="SUPFAM" id="SSF51735">
    <property type="entry name" value="NAD(P)-binding Rossmann-fold domains"/>
    <property type="match status" value="1"/>
</dbReference>
<dbReference type="PROSITE" id="PS51318">
    <property type="entry name" value="TAT"/>
    <property type="match status" value="1"/>
</dbReference>
<reference key="1">
    <citation type="submission" date="2006-08" db="EMBL/GenBank/DDBJ databases">
        <title>Complete sequence of Shewanella sp. MR-4.</title>
        <authorList>
            <consortium name="US DOE Joint Genome Institute"/>
            <person name="Copeland A."/>
            <person name="Lucas S."/>
            <person name="Lapidus A."/>
            <person name="Barry K."/>
            <person name="Detter J.C."/>
            <person name="Glavina del Rio T."/>
            <person name="Hammon N."/>
            <person name="Israni S."/>
            <person name="Dalin E."/>
            <person name="Tice H."/>
            <person name="Pitluck S."/>
            <person name="Kiss H."/>
            <person name="Brettin T."/>
            <person name="Bruce D."/>
            <person name="Han C."/>
            <person name="Tapia R."/>
            <person name="Gilna P."/>
            <person name="Schmutz J."/>
            <person name="Larimer F."/>
            <person name="Land M."/>
            <person name="Hauser L."/>
            <person name="Kyrpides N."/>
            <person name="Mikhailova N."/>
            <person name="Nealson K."/>
            <person name="Konstantinidis K."/>
            <person name="Klappenbach J."/>
            <person name="Tiedje J."/>
            <person name="Richardson P."/>
        </authorList>
    </citation>
    <scope>NUCLEOTIDE SEQUENCE [LARGE SCALE GENOMIC DNA]</scope>
    <source>
        <strain>MR-4</strain>
    </source>
</reference>
<feature type="signal peptide" description="Tat-type signal" evidence="2">
    <location>
        <begin position="1"/>
        <end position="33"/>
    </location>
</feature>
<feature type="chain" id="PRO_5000129974" description="Glycosyl hydrolase family 109 protein 2">
    <location>
        <begin position="34"/>
        <end position="456"/>
    </location>
</feature>
<feature type="binding site" evidence="1">
    <location>
        <begin position="63"/>
        <end position="64"/>
    </location>
    <ligand>
        <name>NAD(+)</name>
        <dbReference type="ChEBI" id="CHEBI:57540"/>
    </ligand>
</feature>
<feature type="binding site" evidence="1">
    <location>
        <position position="85"/>
    </location>
    <ligand>
        <name>NAD(+)</name>
        <dbReference type="ChEBI" id="CHEBI:57540"/>
    </ligand>
</feature>
<feature type="binding site" evidence="1">
    <location>
        <begin position="134"/>
        <end position="137"/>
    </location>
    <ligand>
        <name>NAD(+)</name>
        <dbReference type="ChEBI" id="CHEBI:57540"/>
    </ligand>
</feature>
<feature type="binding site" evidence="1">
    <location>
        <begin position="154"/>
        <end position="155"/>
    </location>
    <ligand>
        <name>NAD(+)</name>
        <dbReference type="ChEBI" id="CHEBI:57540"/>
    </ligand>
</feature>
<feature type="binding site" evidence="1">
    <location>
        <position position="183"/>
    </location>
    <ligand>
        <name>NAD(+)</name>
        <dbReference type="ChEBI" id="CHEBI:57540"/>
    </ligand>
</feature>
<feature type="binding site" evidence="1">
    <location>
        <position position="212"/>
    </location>
    <ligand>
        <name>substrate</name>
    </ligand>
</feature>
<feature type="binding site" evidence="1">
    <location>
        <position position="231"/>
    </location>
    <ligand>
        <name>substrate</name>
    </ligand>
</feature>
<feature type="binding site" evidence="1">
    <location>
        <begin position="243"/>
        <end position="246"/>
    </location>
    <ligand>
        <name>substrate</name>
    </ligand>
</feature>
<feature type="binding site" evidence="1">
    <location>
        <position position="243"/>
    </location>
    <ligand>
        <name>NAD(+)</name>
        <dbReference type="ChEBI" id="CHEBI:57540"/>
    </ligand>
</feature>
<feature type="binding site" evidence="1">
    <location>
        <position position="325"/>
    </location>
    <ligand>
        <name>substrate</name>
    </ligand>
</feature>
<protein>
    <recommendedName>
        <fullName>Glycosyl hydrolase family 109 protein 2</fullName>
        <ecNumber>3.2.1.-</ecNumber>
    </recommendedName>
</protein>
<evidence type="ECO:0000250" key="1"/>
<evidence type="ECO:0000255" key="2">
    <source>
        <dbReference type="PROSITE-ProRule" id="PRU00648"/>
    </source>
</evidence>
<evidence type="ECO:0000305" key="3"/>
<comment type="function">
    <text evidence="1">Glycosidase.</text>
</comment>
<comment type="cofactor">
    <cofactor evidence="1">
        <name>NAD(+)</name>
        <dbReference type="ChEBI" id="CHEBI:57540"/>
    </cofactor>
    <text evidence="1">Binds 1 NAD(+) per subunit. The NAD(+) cannot dissociate.</text>
</comment>
<comment type="PTM">
    <text>Predicted to be exported by the Tat system. The position of the signal peptide cleavage has not been experimentally proven.</text>
</comment>
<comment type="similarity">
    <text evidence="3">Belongs to the Gfo/Idh/MocA family. Glycosyl hydrolase 109 subfamily.</text>
</comment>
<sequence length="456" mass="50745">MSGFDRRSFLKASMVTAAATALAACASSERATGTTPKAAGKSVMGLVVPKMDEVRVGLIGVGERGIGFVHHFSRIEGARITAICDTDTLVLARAEKAINEYGRDKPAYFSKGDHAYRDLLNRDDVDIVVIATPWAWHHPMAKEAMLAGKHAFVEVPMAGTIEELWDLVDTAELTQRNCMMMENVCYGRDELMVLNMVRQGLFGELLHGEAAYIHELRWQMKEIDRKTGSWRTAYHAKYNGNLYPTHGLGPVAQYMNINRGDRLDYLTSVSSPSLGRAAYAKREFPADHQRNQLKYIGGDMNTSLIKTVKGRSIMVQHDTTTPRPYSRHNLIQGTNGVFGGFPNRIALENGGSGSYHEWDENMDSWYAKYDHPLWTRMGKEAEENGGHGGMDFLMCWRMIYCLRNGEALDQDVYDGAAWSAVFPLSVASVGDRGNSKDFPDFTRGVWQTAKPLGIVG</sequence>